<dbReference type="EC" id="2.3.2.16"/>
<dbReference type="EMBL" id="CP000046">
    <property type="protein sequence ID" value="AAW37126.1"/>
    <property type="molecule type" value="Genomic_DNA"/>
</dbReference>
<dbReference type="RefSeq" id="WP_000413868.1">
    <property type="nucleotide sequence ID" value="NC_002951.2"/>
</dbReference>
<dbReference type="SMR" id="Q5HDU6"/>
<dbReference type="KEGG" id="sac:SACOL2253"/>
<dbReference type="HOGENOM" id="CLU_048411_0_1_9"/>
<dbReference type="Proteomes" id="UP000000530">
    <property type="component" value="Chromosome"/>
</dbReference>
<dbReference type="GO" id="GO:0005737">
    <property type="term" value="C:cytoplasm"/>
    <property type="evidence" value="ECO:0007669"/>
    <property type="project" value="UniProtKB-SubCell"/>
</dbReference>
<dbReference type="GO" id="GO:0016755">
    <property type="term" value="F:aminoacyltransferase activity"/>
    <property type="evidence" value="ECO:0007669"/>
    <property type="project" value="InterPro"/>
</dbReference>
<dbReference type="GO" id="GO:0071555">
    <property type="term" value="P:cell wall organization"/>
    <property type="evidence" value="ECO:0007669"/>
    <property type="project" value="UniProtKB-KW"/>
</dbReference>
<dbReference type="GO" id="GO:0009252">
    <property type="term" value="P:peptidoglycan biosynthetic process"/>
    <property type="evidence" value="ECO:0007669"/>
    <property type="project" value="UniProtKB-KW"/>
</dbReference>
<dbReference type="GO" id="GO:0008360">
    <property type="term" value="P:regulation of cell shape"/>
    <property type="evidence" value="ECO:0007669"/>
    <property type="project" value="UniProtKB-KW"/>
</dbReference>
<dbReference type="GO" id="GO:0046677">
    <property type="term" value="P:response to antibiotic"/>
    <property type="evidence" value="ECO:0007669"/>
    <property type="project" value="UniProtKB-KW"/>
</dbReference>
<dbReference type="Gene3D" id="1.20.58.90">
    <property type="match status" value="1"/>
</dbReference>
<dbReference type="Gene3D" id="3.40.630.30">
    <property type="match status" value="2"/>
</dbReference>
<dbReference type="InterPro" id="IPR016181">
    <property type="entry name" value="Acyl_CoA_acyltransferase"/>
</dbReference>
<dbReference type="InterPro" id="IPR003447">
    <property type="entry name" value="FEMABX"/>
</dbReference>
<dbReference type="InterPro" id="IPR050644">
    <property type="entry name" value="PG_Glycine_Bridge_Synth"/>
</dbReference>
<dbReference type="PANTHER" id="PTHR36174">
    <property type="entry name" value="LIPID II:GLYCINE GLYCYLTRANSFERASE"/>
    <property type="match status" value="1"/>
</dbReference>
<dbReference type="PANTHER" id="PTHR36174:SF1">
    <property type="entry name" value="LIPID II:GLYCINE GLYCYLTRANSFERASE"/>
    <property type="match status" value="1"/>
</dbReference>
<dbReference type="Pfam" id="PF02388">
    <property type="entry name" value="FemAB"/>
    <property type="match status" value="1"/>
</dbReference>
<dbReference type="SUPFAM" id="SSF55729">
    <property type="entry name" value="Acyl-CoA N-acyltransferases (Nat)"/>
    <property type="match status" value="2"/>
</dbReference>
<dbReference type="PROSITE" id="PS51191">
    <property type="entry name" value="FEMABX"/>
    <property type="match status" value="1"/>
</dbReference>
<reference key="1">
    <citation type="journal article" date="2005" name="J. Bacteriol.">
        <title>Insights on evolution of virulence and resistance from the complete genome analysis of an early methicillin-resistant Staphylococcus aureus strain and a biofilm-producing methicillin-resistant Staphylococcus epidermidis strain.</title>
        <authorList>
            <person name="Gill S.R."/>
            <person name="Fouts D.E."/>
            <person name="Archer G.L."/>
            <person name="Mongodin E.F."/>
            <person name="DeBoy R.T."/>
            <person name="Ravel J."/>
            <person name="Paulsen I.T."/>
            <person name="Kolonay J.F."/>
            <person name="Brinkac L.M."/>
            <person name="Beanan M.J."/>
            <person name="Dodson R.J."/>
            <person name="Daugherty S.C."/>
            <person name="Madupu R."/>
            <person name="Angiuoli S.V."/>
            <person name="Durkin A.S."/>
            <person name="Haft D.H."/>
            <person name="Vamathevan J.J."/>
            <person name="Khouri H."/>
            <person name="Utterback T.R."/>
            <person name="Lee C."/>
            <person name="Dimitrov G."/>
            <person name="Jiang L."/>
            <person name="Qin H."/>
            <person name="Weidman J."/>
            <person name="Tran K."/>
            <person name="Kang K.H."/>
            <person name="Hance I.R."/>
            <person name="Nelson K.E."/>
            <person name="Fraser C.M."/>
        </authorList>
    </citation>
    <scope>NUCLEOTIDE SEQUENCE [LARGE SCALE GENOMIC DNA]</scope>
    <source>
        <strain>COL</strain>
    </source>
</reference>
<organism>
    <name type="scientific">Staphylococcus aureus (strain COL)</name>
    <dbReference type="NCBI Taxonomy" id="93062"/>
    <lineage>
        <taxon>Bacteria</taxon>
        <taxon>Bacillati</taxon>
        <taxon>Bacillota</taxon>
        <taxon>Bacilli</taxon>
        <taxon>Bacillales</taxon>
        <taxon>Staphylococcaceae</taxon>
        <taxon>Staphylococcus</taxon>
    </lineage>
</organism>
<protein>
    <recommendedName>
        <fullName>Lipid II:glycine glycyltransferase</fullName>
        <ecNumber>2.3.2.16</ecNumber>
    </recommendedName>
    <alternativeName>
        <fullName>Factor essential for expression of methicillin resistance X</fullName>
    </alternativeName>
</protein>
<name>FEMX_STAAC</name>
<sequence>MEKMHITNQEHDAFVKSHPNGDLLQLTKWAETKKLTGWYARRIAVGRDGEVQGVAQLLFKKVPKLPYTLCYISRGFVVDYSNKEALNALLDSAKEIAKAEKTYAIKIDPDVEVDKGTDALQNLKALGFKHKGFKEGLSKDYIQPRMTMITPIDKNDDELLNSFERRNRSKVRLALKRGTTVERSDREGLKTFAELMKITGERDGFLTRDISYFENIYDALHEDGDAELFLVKLDPKENIAKVNQELNELHAEIAKWQQKMKTSEKQAKKAQNMINDAQNKIAKNEDLKRDLEALEKEHPEGIYLSGALLMFAGSKSYYLYGASSNEFRDFLPNHHMQYTMMKYAREHGATTYDFGGTDNDPDKDSEHYGLWAFKKVWGTYLSEKIGEFDYVLNQPLYQLIEQVKPRLTKAKIKISRKLKRK</sequence>
<accession>Q5HDU6</accession>
<evidence type="ECO:0000250" key="1"/>
<evidence type="ECO:0000305" key="2"/>
<feature type="chain" id="PRO_0000236170" description="Lipid II:glycine glycyltransferase">
    <location>
        <begin position="1"/>
        <end position="421"/>
    </location>
</feature>
<comment type="function">
    <text evidence="1">Catalyzes the incorporation of the first glycine of the pentaglycine interpeptide bridge, which is characteristic of the S.aureus peptidoglycan. This glycine is added to the epsilon-amino group of the L-lysine of the membrane-bound lipid II intermediate (GlcNAc-(beta-1,4)-N-acetylmuramic acid(-L-Ala-D-iGln-L-Lys-D-Ala-D-Ala)-pyrophosphoryl-undecaprenol), using glycyl-tRNA(Gly) as donor, in a ribosome-independent mechanism. Involved in methicillin resistance (By similarity).</text>
</comment>
<comment type="catalytic activity">
    <reaction>
        <text>beta-D-GlcNAc-(1-&gt;4)-Mur2Ac(oyl-L-Ala-D-isoglutaminyl-L-Lys-D-Ala-D-Ala)-di-trans,octa-cis-undecaprenyl diphosphate + glycyl-tRNA(Gly) = beta-D-GlcNAc-(1-&gt;4)-Mur2Ac(oyl-L-Ala-D-isoglutaminyl-L-Lys-(N(6)-Gly)-D-Ala-D-Ala)-di-trans,octa-cis-undecaprenyl diphosphate + tRNA(Gly) + H(+)</text>
        <dbReference type="Rhea" id="RHEA:30435"/>
        <dbReference type="Rhea" id="RHEA-COMP:9664"/>
        <dbReference type="Rhea" id="RHEA-COMP:9683"/>
        <dbReference type="ChEBI" id="CHEBI:15378"/>
        <dbReference type="ChEBI" id="CHEBI:62233"/>
        <dbReference type="ChEBI" id="CHEBI:62234"/>
        <dbReference type="ChEBI" id="CHEBI:78442"/>
        <dbReference type="ChEBI" id="CHEBI:78522"/>
        <dbReference type="EC" id="2.3.2.16"/>
    </reaction>
</comment>
<comment type="subunit">
    <text evidence="1">Monomer.</text>
</comment>
<comment type="subcellular location">
    <subcellularLocation>
        <location evidence="2">Cytoplasm</location>
    </subcellularLocation>
</comment>
<comment type="similarity">
    <text evidence="2">Belongs to the FemABX family.</text>
</comment>
<keyword id="KW-0012">Acyltransferase</keyword>
<keyword id="KW-0046">Antibiotic resistance</keyword>
<keyword id="KW-0133">Cell shape</keyword>
<keyword id="KW-0961">Cell wall biogenesis/degradation</keyword>
<keyword id="KW-0963">Cytoplasm</keyword>
<keyword id="KW-0573">Peptidoglycan synthesis</keyword>
<keyword id="KW-0808">Transferase</keyword>
<gene>
    <name type="primary">femX</name>
    <name type="synonym">fmhB</name>
    <name type="ordered locus">SACOL2253</name>
</gene>
<proteinExistence type="inferred from homology"/>